<organism>
    <name type="scientific">Sus scrofa</name>
    <name type="common">Pig</name>
    <dbReference type="NCBI Taxonomy" id="9823"/>
    <lineage>
        <taxon>Eukaryota</taxon>
        <taxon>Metazoa</taxon>
        <taxon>Chordata</taxon>
        <taxon>Craniata</taxon>
        <taxon>Vertebrata</taxon>
        <taxon>Euteleostomi</taxon>
        <taxon>Mammalia</taxon>
        <taxon>Eutheria</taxon>
        <taxon>Laurasiatheria</taxon>
        <taxon>Artiodactyla</taxon>
        <taxon>Suina</taxon>
        <taxon>Suidae</taxon>
        <taxon>Sus</taxon>
    </lineage>
</organism>
<proteinExistence type="inferred from homology"/>
<dbReference type="EC" id="3.2.1.18"/>
<dbReference type="EMBL" id="AL773527">
    <property type="protein sequence ID" value="CAN87707.1"/>
    <property type="molecule type" value="Genomic_DNA"/>
</dbReference>
<dbReference type="RefSeq" id="NP_001095292.1">
    <property type="nucleotide sequence ID" value="NM_001101822.1"/>
</dbReference>
<dbReference type="SMR" id="A5PF10"/>
<dbReference type="FunCoup" id="A5PF10">
    <property type="interactions" value="175"/>
</dbReference>
<dbReference type="STRING" id="9823.ENSSSCP00000001513"/>
<dbReference type="CAZy" id="GH33">
    <property type="family name" value="Glycoside Hydrolase Family 33"/>
</dbReference>
<dbReference type="GlyCosmos" id="A5PF10">
    <property type="glycosylation" value="3 sites, No reported glycans"/>
</dbReference>
<dbReference type="GlyGen" id="A5PF10">
    <property type="glycosylation" value="3 sites"/>
</dbReference>
<dbReference type="PaxDb" id="9823-ENSSSCP00000001513"/>
<dbReference type="PeptideAtlas" id="A5PF10"/>
<dbReference type="Ensembl" id="ENSSSCT00070046815.1">
    <property type="protein sequence ID" value="ENSSSCP00070039491.1"/>
    <property type="gene ID" value="ENSSSCG00070023485.1"/>
</dbReference>
<dbReference type="Ensembl" id="ENSSSCT00105038554">
    <property type="protein sequence ID" value="ENSSSCP00105026741"/>
    <property type="gene ID" value="ENSSSCG00105020199"/>
</dbReference>
<dbReference type="Ensembl" id="ENSSSCT00110045593">
    <property type="protein sequence ID" value="ENSSSCP00110032162"/>
    <property type="gene ID" value="ENSSSCG00110023571"/>
</dbReference>
<dbReference type="GeneID" id="100124381"/>
<dbReference type="KEGG" id="ssc:100124381"/>
<dbReference type="CTD" id="4758"/>
<dbReference type="eggNOG" id="ENOG502QSIT">
    <property type="taxonomic scope" value="Eukaryota"/>
</dbReference>
<dbReference type="InParanoid" id="A5PF10"/>
<dbReference type="OrthoDB" id="2739686at2759"/>
<dbReference type="Reactome" id="R-SSC-4085001">
    <property type="pathway name" value="Sialic acid metabolism"/>
</dbReference>
<dbReference type="Reactome" id="R-SSC-6798695">
    <property type="pathway name" value="Neutrophil degranulation"/>
</dbReference>
<dbReference type="Reactome" id="R-SSC-9840310">
    <property type="pathway name" value="Glycosphingolipid catabolism"/>
</dbReference>
<dbReference type="Proteomes" id="UP000008227">
    <property type="component" value="Unplaced"/>
</dbReference>
<dbReference type="Proteomes" id="UP000314985">
    <property type="component" value="Chromosome 7"/>
</dbReference>
<dbReference type="Proteomes" id="UP000694570">
    <property type="component" value="Unplaced"/>
</dbReference>
<dbReference type="Proteomes" id="UP000694571">
    <property type="component" value="Unplaced"/>
</dbReference>
<dbReference type="Proteomes" id="UP000694720">
    <property type="component" value="Unplaced"/>
</dbReference>
<dbReference type="Proteomes" id="UP000694722">
    <property type="component" value="Unplaced"/>
</dbReference>
<dbReference type="Proteomes" id="UP000694723">
    <property type="component" value="Unplaced"/>
</dbReference>
<dbReference type="Proteomes" id="UP000694724">
    <property type="component" value="Unplaced"/>
</dbReference>
<dbReference type="Proteomes" id="UP000694725">
    <property type="component" value="Unplaced"/>
</dbReference>
<dbReference type="Proteomes" id="UP000694726">
    <property type="component" value="Unplaced"/>
</dbReference>
<dbReference type="Proteomes" id="UP000694727">
    <property type="component" value="Unplaced"/>
</dbReference>
<dbReference type="Proteomes" id="UP000694728">
    <property type="component" value="Unplaced"/>
</dbReference>
<dbReference type="GO" id="GO:0005737">
    <property type="term" value="C:cytoplasm"/>
    <property type="evidence" value="ECO:0000318"/>
    <property type="project" value="GO_Central"/>
</dbReference>
<dbReference type="GO" id="GO:0031410">
    <property type="term" value="C:cytoplasmic vesicle"/>
    <property type="evidence" value="ECO:0007669"/>
    <property type="project" value="UniProtKB-KW"/>
</dbReference>
<dbReference type="GO" id="GO:0043202">
    <property type="term" value="C:lysosomal lumen"/>
    <property type="evidence" value="ECO:0007669"/>
    <property type="project" value="UniProtKB-SubCell"/>
</dbReference>
<dbReference type="GO" id="GO:0005765">
    <property type="term" value="C:lysosomal membrane"/>
    <property type="evidence" value="ECO:0007669"/>
    <property type="project" value="UniProtKB-SubCell"/>
</dbReference>
<dbReference type="GO" id="GO:0005764">
    <property type="term" value="C:lysosome"/>
    <property type="evidence" value="ECO:0000250"/>
    <property type="project" value="UniProtKB"/>
</dbReference>
<dbReference type="GO" id="GO:0016020">
    <property type="term" value="C:membrane"/>
    <property type="evidence" value="ECO:0000318"/>
    <property type="project" value="GO_Central"/>
</dbReference>
<dbReference type="GO" id="GO:0005886">
    <property type="term" value="C:plasma membrane"/>
    <property type="evidence" value="ECO:0007669"/>
    <property type="project" value="UniProtKB-SubCell"/>
</dbReference>
<dbReference type="GO" id="GO:0004308">
    <property type="term" value="F:exo-alpha-sialidase activity"/>
    <property type="evidence" value="ECO:0000250"/>
    <property type="project" value="UniProtKB"/>
</dbReference>
<dbReference type="GO" id="GO:0006689">
    <property type="term" value="P:ganglioside catabolic process"/>
    <property type="evidence" value="ECO:0000318"/>
    <property type="project" value="GO_Central"/>
</dbReference>
<dbReference type="GO" id="GO:0009313">
    <property type="term" value="P:oligosaccharide catabolic process"/>
    <property type="evidence" value="ECO:0000250"/>
    <property type="project" value="UniProtKB"/>
</dbReference>
<dbReference type="CDD" id="cd15482">
    <property type="entry name" value="Sialidase_non-viral"/>
    <property type="match status" value="1"/>
</dbReference>
<dbReference type="FunFam" id="2.120.10.10:FF:000003">
    <property type="entry name" value="Neuraminidase 1"/>
    <property type="match status" value="1"/>
</dbReference>
<dbReference type="Gene3D" id="2.120.10.10">
    <property type="match status" value="1"/>
</dbReference>
<dbReference type="InterPro" id="IPR011040">
    <property type="entry name" value="Sialidase"/>
</dbReference>
<dbReference type="InterPro" id="IPR026856">
    <property type="entry name" value="Sialidase_fam"/>
</dbReference>
<dbReference type="InterPro" id="IPR036278">
    <property type="entry name" value="Sialidase_sf"/>
</dbReference>
<dbReference type="PANTHER" id="PTHR10628">
    <property type="entry name" value="SIALIDASE"/>
    <property type="match status" value="1"/>
</dbReference>
<dbReference type="PANTHER" id="PTHR10628:SF25">
    <property type="entry name" value="SIALIDASE-1"/>
    <property type="match status" value="1"/>
</dbReference>
<dbReference type="Pfam" id="PF13088">
    <property type="entry name" value="BNR_2"/>
    <property type="match status" value="1"/>
</dbReference>
<dbReference type="SUPFAM" id="SSF50939">
    <property type="entry name" value="Sialidases"/>
    <property type="match status" value="1"/>
</dbReference>
<gene>
    <name type="primary">NEU1</name>
</gene>
<feature type="signal peptide" evidence="1">
    <location>
        <begin position="1"/>
        <end position="48"/>
    </location>
</feature>
<feature type="chain" id="PRO_0000304727" description="Sialidase-1">
    <location>
        <begin position="49"/>
        <end position="416"/>
    </location>
</feature>
<feature type="repeat" description="BNR 1">
    <location>
        <begin position="113"/>
        <end position="124"/>
    </location>
</feature>
<feature type="repeat" description="BNR 2">
    <location>
        <begin position="173"/>
        <end position="184"/>
    </location>
</feature>
<feature type="repeat" description="BNR 3">
    <location>
        <begin position="232"/>
        <end position="243"/>
    </location>
</feature>
<feature type="repeat" description="BNR 4">
    <location>
        <begin position="348"/>
        <end position="359"/>
    </location>
</feature>
<feature type="short sequence motif" description="FRIP motif">
    <location>
        <begin position="78"/>
        <end position="81"/>
    </location>
</feature>
<feature type="short sequence motif" description="Internalization signal">
    <location>
        <begin position="413"/>
        <end position="416"/>
    </location>
</feature>
<feature type="active site" description="Proton acceptor" evidence="1">
    <location>
        <position position="104"/>
    </location>
</feature>
<feature type="active site" description="Nucleophile" evidence="1">
    <location>
        <position position="371"/>
    </location>
</feature>
<feature type="active site" evidence="2">
    <location>
        <position position="395"/>
    </location>
</feature>
<feature type="binding site" evidence="1">
    <location>
        <position position="79"/>
    </location>
    <ligand>
        <name>substrate</name>
    </ligand>
</feature>
<feature type="binding site" evidence="1">
    <location>
        <position position="98"/>
    </location>
    <ligand>
        <name>substrate</name>
    </ligand>
</feature>
<feature type="binding site" evidence="1">
    <location>
        <position position="265"/>
    </location>
    <ligand>
        <name>substrate</name>
    </ligand>
</feature>
<feature type="binding site" evidence="1">
    <location>
        <position position="281"/>
    </location>
    <ligand>
        <name>substrate</name>
    </ligand>
</feature>
<feature type="binding site" evidence="1">
    <location>
        <position position="342"/>
    </location>
    <ligand>
        <name>substrate</name>
    </ligand>
</feature>
<feature type="glycosylation site" description="N-linked (GlcNAc...) asparagine" evidence="2">
    <location>
        <position position="187"/>
    </location>
</feature>
<feature type="glycosylation site" description="N-linked (GlcNAc...) asparagine" evidence="2">
    <location>
        <position position="344"/>
    </location>
</feature>
<feature type="glycosylation site" description="N-linked (GlcNAc...) asparagine" evidence="2">
    <location>
        <position position="353"/>
    </location>
</feature>
<keyword id="KW-0119">Carbohydrate metabolism</keyword>
<keyword id="KW-1003">Cell membrane</keyword>
<keyword id="KW-0968">Cytoplasmic vesicle</keyword>
<keyword id="KW-0325">Glycoprotein</keyword>
<keyword id="KW-0326">Glycosidase</keyword>
<keyword id="KW-0378">Hydrolase</keyword>
<keyword id="KW-0442">Lipid degradation</keyword>
<keyword id="KW-0443">Lipid metabolism</keyword>
<keyword id="KW-0458">Lysosome</keyword>
<keyword id="KW-0472">Membrane</keyword>
<keyword id="KW-0597">Phosphoprotein</keyword>
<keyword id="KW-1185">Reference proteome</keyword>
<keyword id="KW-0677">Repeat</keyword>
<keyword id="KW-0732">Signal</keyword>
<reference key="1">
    <citation type="submission" date="2007-06" db="EMBL/GenBank/DDBJ databases">
        <authorList>
            <consortium name="Porcine genome sequencing project"/>
        </authorList>
    </citation>
    <scope>NUCLEOTIDE SEQUENCE [LARGE SCALE GENOMIC DNA]</scope>
</reference>
<protein>
    <recommendedName>
        <fullName>Sialidase-1</fullName>
        <ecNumber>3.2.1.18</ecNumber>
    </recommendedName>
    <alternativeName>
        <fullName>Acetylneuraminyl hydrolase</fullName>
    </alternativeName>
    <alternativeName>
        <fullName>Lysosomal sialidase</fullName>
    </alternativeName>
    <alternativeName>
        <fullName>N-acetyl-alpha-neuraminidase 1</fullName>
    </alternativeName>
</protein>
<name>NEUR1_PIG</name>
<evidence type="ECO:0000250" key="1"/>
<evidence type="ECO:0000255" key="2"/>
<evidence type="ECO:0000305" key="3"/>
<accession>A5PF10</accession>
<comment type="function">
    <text evidence="1">Catalyzes the removal of sialic acid (N-acetylneuraminic acid) moieties from glycoproteins and glycolipids. To be active, it is strictly dependent on its presence in the multienzyme complex. Appears to have a preference for alpha 2-3 and alpha 2-6 sialyl linkage (By similarity).</text>
</comment>
<comment type="catalytic activity">
    <reaction>
        <text>Hydrolysis of alpha-(2-&gt;3)-, alpha-(2-&gt;6)-, alpha-(2-&gt;8)- glycosidic linkages of terminal sialic acid residues in oligosaccharides, glycoproteins, glycolipids, colominic acid and synthetic substrates.</text>
        <dbReference type="EC" id="3.2.1.18"/>
    </reaction>
</comment>
<comment type="subunit">
    <text evidence="1">Interacts with cathepsin A (protective protein), beta-galactosidase and N-acetylgalactosamine-6-sulfate sulfatase in a multienzyme complex.</text>
</comment>
<comment type="subcellular location">
    <subcellularLocation>
        <location evidence="1">Lysosome membrane</location>
        <topology evidence="1">Peripheral membrane protein</topology>
        <orientation evidence="1">Lumenal side</orientation>
    </subcellularLocation>
    <subcellularLocation>
        <location evidence="1">Lysosome lumen</location>
    </subcellularLocation>
    <subcellularLocation>
        <location evidence="1">Cell membrane</location>
    </subcellularLocation>
    <subcellularLocation>
        <location evidence="1">Cytoplasmic vesicle</location>
    </subcellularLocation>
    <text evidence="1">Localized not only on the inner side of the lysosomal membrane and in the lysosomal lumen, but also on the plasma membrane and in intracellular vesicles.</text>
</comment>
<comment type="domain">
    <text evidence="1">A C-terminal internalization signal (YGTL) appears to allow the targeting of plasma membrane proteins to endosomes.</text>
</comment>
<comment type="PTM">
    <text evidence="1">N-glycosylated.</text>
</comment>
<comment type="PTM">
    <text evidence="1">Phosphorylation of tyrosine within the internalization signal results in inhibition of sialidase internalization and blockage on the plasma membrane.</text>
</comment>
<comment type="similarity">
    <text evidence="3">Belongs to the glycosyl hydrolase 33 family.</text>
</comment>
<sequence>MTAERPGAVPLGRPGRPPMLGLGEAYRAQVFASIFLLLLSPAGVGARAKNDFNLVHPLVTMEQLLWVSGKQIGSVDTFRIPLITTTPRGTLLAFAEARKMSASDKGAKFIALRRSMDQGSTWSPTAFIVDDGETPDGLNLGAVVSDTTTGVVFLFYSLCAHKAGCRVASTMLVWSKDDGISWSSPRNLSLDIGTEMFAPGPGSGIQKQWAPQKGRLIVCGHGTLERDGVFCLLSDDHGASWRYGSGISGIPYGQPKRENDFNPDECQPYELPDGSVVINARNQNNYHCRCRIVLRSYDACDTLRPRDVTFDPELVDPVVAAGAVATSSGIIFFSNPAHPEFRVNLTLRWSFSNGTSWRKETVQIWPGPSGYSSLATLEGSVGGEDQAPQLYVLYEKGRNRYTESISLAKVSVYGTL</sequence>